<accession>Q2GCC7</accession>
<evidence type="ECO:0000255" key="1">
    <source>
        <dbReference type="HAMAP-Rule" id="MF_00580"/>
    </source>
</evidence>
<proteinExistence type="inferred from homology"/>
<dbReference type="EMBL" id="CP000248">
    <property type="protein sequence ID" value="ABD24483.1"/>
    <property type="molecule type" value="Genomic_DNA"/>
</dbReference>
<dbReference type="RefSeq" id="WP_011443697.1">
    <property type="nucleotide sequence ID" value="NC_007794.1"/>
</dbReference>
<dbReference type="SMR" id="Q2GCC7"/>
<dbReference type="STRING" id="279238.Saro_0034"/>
<dbReference type="KEGG" id="nar:Saro_0034"/>
<dbReference type="eggNOG" id="COG0234">
    <property type="taxonomic scope" value="Bacteria"/>
</dbReference>
<dbReference type="HOGENOM" id="CLU_132825_1_0_5"/>
<dbReference type="Proteomes" id="UP000009134">
    <property type="component" value="Chromosome"/>
</dbReference>
<dbReference type="GO" id="GO:0005737">
    <property type="term" value="C:cytoplasm"/>
    <property type="evidence" value="ECO:0007669"/>
    <property type="project" value="UniProtKB-SubCell"/>
</dbReference>
<dbReference type="GO" id="GO:0005524">
    <property type="term" value="F:ATP binding"/>
    <property type="evidence" value="ECO:0007669"/>
    <property type="project" value="InterPro"/>
</dbReference>
<dbReference type="GO" id="GO:0046872">
    <property type="term" value="F:metal ion binding"/>
    <property type="evidence" value="ECO:0007669"/>
    <property type="project" value="TreeGrafter"/>
</dbReference>
<dbReference type="GO" id="GO:0044183">
    <property type="term" value="F:protein folding chaperone"/>
    <property type="evidence" value="ECO:0007669"/>
    <property type="project" value="InterPro"/>
</dbReference>
<dbReference type="GO" id="GO:0051087">
    <property type="term" value="F:protein-folding chaperone binding"/>
    <property type="evidence" value="ECO:0007669"/>
    <property type="project" value="TreeGrafter"/>
</dbReference>
<dbReference type="GO" id="GO:0051082">
    <property type="term" value="F:unfolded protein binding"/>
    <property type="evidence" value="ECO:0007669"/>
    <property type="project" value="TreeGrafter"/>
</dbReference>
<dbReference type="GO" id="GO:0051085">
    <property type="term" value="P:chaperone cofactor-dependent protein refolding"/>
    <property type="evidence" value="ECO:0007669"/>
    <property type="project" value="TreeGrafter"/>
</dbReference>
<dbReference type="CDD" id="cd00320">
    <property type="entry name" value="cpn10"/>
    <property type="match status" value="1"/>
</dbReference>
<dbReference type="FunFam" id="2.30.33.40:FF:000001">
    <property type="entry name" value="10 kDa chaperonin"/>
    <property type="match status" value="1"/>
</dbReference>
<dbReference type="Gene3D" id="2.30.33.40">
    <property type="entry name" value="GroES chaperonin"/>
    <property type="match status" value="1"/>
</dbReference>
<dbReference type="HAMAP" id="MF_00580">
    <property type="entry name" value="CH10"/>
    <property type="match status" value="1"/>
</dbReference>
<dbReference type="InterPro" id="IPR020818">
    <property type="entry name" value="Chaperonin_GroES"/>
</dbReference>
<dbReference type="InterPro" id="IPR037124">
    <property type="entry name" value="Chaperonin_GroES_sf"/>
</dbReference>
<dbReference type="InterPro" id="IPR018369">
    <property type="entry name" value="Chaprnonin_Cpn10_CS"/>
</dbReference>
<dbReference type="InterPro" id="IPR011032">
    <property type="entry name" value="GroES-like_sf"/>
</dbReference>
<dbReference type="NCBIfam" id="NF001527">
    <property type="entry name" value="PRK00364.1-2"/>
    <property type="match status" value="1"/>
</dbReference>
<dbReference type="NCBIfam" id="NF001529">
    <property type="entry name" value="PRK00364.1-5"/>
    <property type="match status" value="1"/>
</dbReference>
<dbReference type="NCBIfam" id="NF001531">
    <property type="entry name" value="PRK00364.2-2"/>
    <property type="match status" value="1"/>
</dbReference>
<dbReference type="NCBIfam" id="NF001533">
    <property type="entry name" value="PRK00364.2-4"/>
    <property type="match status" value="1"/>
</dbReference>
<dbReference type="NCBIfam" id="NF001534">
    <property type="entry name" value="PRK00364.2-5"/>
    <property type="match status" value="1"/>
</dbReference>
<dbReference type="PANTHER" id="PTHR10772">
    <property type="entry name" value="10 KDA HEAT SHOCK PROTEIN"/>
    <property type="match status" value="1"/>
</dbReference>
<dbReference type="PANTHER" id="PTHR10772:SF58">
    <property type="entry name" value="CO-CHAPERONIN GROES"/>
    <property type="match status" value="1"/>
</dbReference>
<dbReference type="Pfam" id="PF00166">
    <property type="entry name" value="Cpn10"/>
    <property type="match status" value="1"/>
</dbReference>
<dbReference type="PRINTS" id="PR00297">
    <property type="entry name" value="CHAPERONIN10"/>
</dbReference>
<dbReference type="SMART" id="SM00883">
    <property type="entry name" value="Cpn10"/>
    <property type="match status" value="1"/>
</dbReference>
<dbReference type="SUPFAM" id="SSF50129">
    <property type="entry name" value="GroES-like"/>
    <property type="match status" value="1"/>
</dbReference>
<dbReference type="PROSITE" id="PS00681">
    <property type="entry name" value="CHAPERONINS_CPN10"/>
    <property type="match status" value="1"/>
</dbReference>
<reference key="1">
    <citation type="submission" date="2006-01" db="EMBL/GenBank/DDBJ databases">
        <title>Complete sequence of Novosphingobium aromaticivorans DSM 12444.</title>
        <authorList>
            <consortium name="US DOE Joint Genome Institute"/>
            <person name="Copeland A."/>
            <person name="Lucas S."/>
            <person name="Lapidus A."/>
            <person name="Barry K."/>
            <person name="Detter J.C."/>
            <person name="Glavina T."/>
            <person name="Hammon N."/>
            <person name="Israni S."/>
            <person name="Pitluck S."/>
            <person name="Chain P."/>
            <person name="Malfatti S."/>
            <person name="Shin M."/>
            <person name="Vergez L."/>
            <person name="Schmutz J."/>
            <person name="Larimer F."/>
            <person name="Land M."/>
            <person name="Kyrpides N."/>
            <person name="Ivanova N."/>
            <person name="Fredrickson J."/>
            <person name="Balkwill D."/>
            <person name="Romine M.F."/>
            <person name="Richardson P."/>
        </authorList>
    </citation>
    <scope>NUCLEOTIDE SEQUENCE [LARGE SCALE GENOMIC DNA]</scope>
    <source>
        <strain>ATCC 700278 / DSM 12444 / CCUG 56034 / CIP 105152 / NBRC 16084 / F199</strain>
    </source>
</reference>
<sequence>MTFRPLHDRVLVRRVEAEEKTAGGIIIPDSAKEKPAEGIVVAVGSGARAENGTITPLDVKANDRVLFGKWSGTEVKVDGEDLLIMKESDILGVIG</sequence>
<comment type="function">
    <text evidence="1">Together with the chaperonin GroEL, plays an essential role in assisting protein folding. The GroEL-GroES system forms a nano-cage that allows encapsulation of the non-native substrate proteins and provides a physical environment optimized to promote and accelerate protein folding. GroES binds to the apical surface of the GroEL ring, thereby capping the opening of the GroEL channel.</text>
</comment>
<comment type="subunit">
    <text evidence="1">Heptamer of 7 subunits arranged in a ring. Interacts with the chaperonin GroEL.</text>
</comment>
<comment type="subcellular location">
    <subcellularLocation>
        <location evidence="1">Cytoplasm</location>
    </subcellularLocation>
</comment>
<comment type="similarity">
    <text evidence="1">Belongs to the GroES chaperonin family.</text>
</comment>
<name>CH10_NOVAD</name>
<keyword id="KW-0143">Chaperone</keyword>
<keyword id="KW-0963">Cytoplasm</keyword>
<keyword id="KW-1185">Reference proteome</keyword>
<gene>
    <name evidence="1" type="primary">groES</name>
    <name evidence="1" type="synonym">groS</name>
    <name type="ordered locus">Saro_0034</name>
</gene>
<protein>
    <recommendedName>
        <fullName evidence="1">Co-chaperonin GroES</fullName>
    </recommendedName>
    <alternativeName>
        <fullName evidence="1">10 kDa chaperonin</fullName>
    </alternativeName>
    <alternativeName>
        <fullName evidence="1">Chaperonin-10</fullName>
        <shortName evidence="1">Cpn10</shortName>
    </alternativeName>
</protein>
<feature type="chain" id="PRO_1000082384" description="Co-chaperonin GroES">
    <location>
        <begin position="1"/>
        <end position="95"/>
    </location>
</feature>
<organism>
    <name type="scientific">Novosphingobium aromaticivorans (strain ATCC 700278 / DSM 12444 / CCUG 56034 / CIP 105152 / NBRC 16084 / F199)</name>
    <dbReference type="NCBI Taxonomy" id="279238"/>
    <lineage>
        <taxon>Bacteria</taxon>
        <taxon>Pseudomonadati</taxon>
        <taxon>Pseudomonadota</taxon>
        <taxon>Alphaproteobacteria</taxon>
        <taxon>Sphingomonadales</taxon>
        <taxon>Sphingomonadaceae</taxon>
        <taxon>Novosphingobium</taxon>
    </lineage>
</organism>